<name>CH10_EXIS2</name>
<sequence>MLKPLGDRIVIEVVKKEETTLGGIVLPGSAKEKPQEGKVVAVGTGRVTEQGVRVPLEVNVGDHVIYAQYAGSEVKVDGNEYLILRESDILAVAN</sequence>
<proteinExistence type="inferred from homology"/>
<comment type="function">
    <text evidence="1">Together with the chaperonin GroEL, plays an essential role in assisting protein folding. The GroEL-GroES system forms a nano-cage that allows encapsulation of the non-native substrate proteins and provides a physical environment optimized to promote and accelerate protein folding. GroES binds to the apical surface of the GroEL ring, thereby capping the opening of the GroEL channel.</text>
</comment>
<comment type="subunit">
    <text evidence="1">Heptamer of 7 subunits arranged in a ring. Interacts with the chaperonin GroEL.</text>
</comment>
<comment type="subcellular location">
    <subcellularLocation>
        <location evidence="1">Cytoplasm</location>
    </subcellularLocation>
</comment>
<comment type="similarity">
    <text evidence="1">Belongs to the GroES chaperonin family.</text>
</comment>
<protein>
    <recommendedName>
        <fullName evidence="1">Co-chaperonin GroES</fullName>
    </recommendedName>
    <alternativeName>
        <fullName evidence="1">10 kDa chaperonin</fullName>
    </alternativeName>
    <alternativeName>
        <fullName evidence="1">Chaperonin-10</fullName>
        <shortName evidence="1">Cpn10</shortName>
    </alternativeName>
</protein>
<dbReference type="EMBL" id="CP001022">
    <property type="protein sequence ID" value="ACB62215.1"/>
    <property type="molecule type" value="Genomic_DNA"/>
</dbReference>
<dbReference type="RefSeq" id="WP_012371631.1">
    <property type="nucleotide sequence ID" value="NC_010556.1"/>
</dbReference>
<dbReference type="SMR" id="B1YEP7"/>
<dbReference type="STRING" id="262543.Exig_2769"/>
<dbReference type="KEGG" id="esi:Exig_2769"/>
<dbReference type="eggNOG" id="COG0234">
    <property type="taxonomic scope" value="Bacteria"/>
</dbReference>
<dbReference type="HOGENOM" id="CLU_132825_2_1_9"/>
<dbReference type="OrthoDB" id="9806791at2"/>
<dbReference type="Proteomes" id="UP000001681">
    <property type="component" value="Chromosome"/>
</dbReference>
<dbReference type="GO" id="GO:0005737">
    <property type="term" value="C:cytoplasm"/>
    <property type="evidence" value="ECO:0007669"/>
    <property type="project" value="UniProtKB-SubCell"/>
</dbReference>
<dbReference type="GO" id="GO:0005524">
    <property type="term" value="F:ATP binding"/>
    <property type="evidence" value="ECO:0007669"/>
    <property type="project" value="InterPro"/>
</dbReference>
<dbReference type="GO" id="GO:0046872">
    <property type="term" value="F:metal ion binding"/>
    <property type="evidence" value="ECO:0007669"/>
    <property type="project" value="TreeGrafter"/>
</dbReference>
<dbReference type="GO" id="GO:0044183">
    <property type="term" value="F:protein folding chaperone"/>
    <property type="evidence" value="ECO:0007669"/>
    <property type="project" value="InterPro"/>
</dbReference>
<dbReference type="GO" id="GO:0051087">
    <property type="term" value="F:protein-folding chaperone binding"/>
    <property type="evidence" value="ECO:0007669"/>
    <property type="project" value="TreeGrafter"/>
</dbReference>
<dbReference type="GO" id="GO:0051082">
    <property type="term" value="F:unfolded protein binding"/>
    <property type="evidence" value="ECO:0007669"/>
    <property type="project" value="TreeGrafter"/>
</dbReference>
<dbReference type="GO" id="GO:0051085">
    <property type="term" value="P:chaperone cofactor-dependent protein refolding"/>
    <property type="evidence" value="ECO:0007669"/>
    <property type="project" value="TreeGrafter"/>
</dbReference>
<dbReference type="CDD" id="cd00320">
    <property type="entry name" value="cpn10"/>
    <property type="match status" value="1"/>
</dbReference>
<dbReference type="FunFam" id="2.30.33.40:FF:000001">
    <property type="entry name" value="10 kDa chaperonin"/>
    <property type="match status" value="1"/>
</dbReference>
<dbReference type="Gene3D" id="2.30.33.40">
    <property type="entry name" value="GroES chaperonin"/>
    <property type="match status" value="1"/>
</dbReference>
<dbReference type="HAMAP" id="MF_00580">
    <property type="entry name" value="CH10"/>
    <property type="match status" value="1"/>
</dbReference>
<dbReference type="InterPro" id="IPR020818">
    <property type="entry name" value="Chaperonin_GroES"/>
</dbReference>
<dbReference type="InterPro" id="IPR037124">
    <property type="entry name" value="Chaperonin_GroES_sf"/>
</dbReference>
<dbReference type="InterPro" id="IPR018369">
    <property type="entry name" value="Chaprnonin_Cpn10_CS"/>
</dbReference>
<dbReference type="InterPro" id="IPR011032">
    <property type="entry name" value="GroES-like_sf"/>
</dbReference>
<dbReference type="NCBIfam" id="NF001531">
    <property type="entry name" value="PRK00364.2-2"/>
    <property type="match status" value="1"/>
</dbReference>
<dbReference type="NCBIfam" id="NF001533">
    <property type="entry name" value="PRK00364.2-4"/>
    <property type="match status" value="1"/>
</dbReference>
<dbReference type="NCBIfam" id="NF001534">
    <property type="entry name" value="PRK00364.2-5"/>
    <property type="match status" value="1"/>
</dbReference>
<dbReference type="PANTHER" id="PTHR10772">
    <property type="entry name" value="10 KDA HEAT SHOCK PROTEIN"/>
    <property type="match status" value="1"/>
</dbReference>
<dbReference type="PANTHER" id="PTHR10772:SF58">
    <property type="entry name" value="CO-CHAPERONIN GROES"/>
    <property type="match status" value="1"/>
</dbReference>
<dbReference type="Pfam" id="PF00166">
    <property type="entry name" value="Cpn10"/>
    <property type="match status" value="1"/>
</dbReference>
<dbReference type="PRINTS" id="PR00297">
    <property type="entry name" value="CHAPERONIN10"/>
</dbReference>
<dbReference type="SMART" id="SM00883">
    <property type="entry name" value="Cpn10"/>
    <property type="match status" value="1"/>
</dbReference>
<dbReference type="SUPFAM" id="SSF50129">
    <property type="entry name" value="GroES-like"/>
    <property type="match status" value="1"/>
</dbReference>
<dbReference type="PROSITE" id="PS00681">
    <property type="entry name" value="CHAPERONINS_CPN10"/>
    <property type="match status" value="1"/>
</dbReference>
<evidence type="ECO:0000255" key="1">
    <source>
        <dbReference type="HAMAP-Rule" id="MF_00580"/>
    </source>
</evidence>
<reference key="1">
    <citation type="submission" date="2008-04" db="EMBL/GenBank/DDBJ databases">
        <title>Complete sequence of chromosome of Exiguobacterium sibiricum 255-15.</title>
        <authorList>
            <consortium name="US DOE Joint Genome Institute"/>
            <person name="Copeland A."/>
            <person name="Lucas S."/>
            <person name="Lapidus A."/>
            <person name="Glavina del Rio T."/>
            <person name="Dalin E."/>
            <person name="Tice H."/>
            <person name="Bruce D."/>
            <person name="Goodwin L."/>
            <person name="Pitluck S."/>
            <person name="Kiss H."/>
            <person name="Chertkov O."/>
            <person name="Monk C."/>
            <person name="Brettin T."/>
            <person name="Detter J.C."/>
            <person name="Han C."/>
            <person name="Kuske C.R."/>
            <person name="Schmutz J."/>
            <person name="Larimer F."/>
            <person name="Land M."/>
            <person name="Hauser L."/>
            <person name="Kyrpides N."/>
            <person name="Mikhailova N."/>
            <person name="Vishnivetskaya T."/>
            <person name="Rodrigues D.F."/>
            <person name="Gilichinsky D."/>
            <person name="Tiedje J."/>
            <person name="Richardson P."/>
        </authorList>
    </citation>
    <scope>NUCLEOTIDE SEQUENCE [LARGE SCALE GENOMIC DNA]</scope>
    <source>
        <strain>DSM 17290 / CCUG 55495 / CIP 109462 / JCM 13490 / 255-15</strain>
    </source>
</reference>
<feature type="chain" id="PRO_1000129662" description="Co-chaperonin GroES">
    <location>
        <begin position="1"/>
        <end position="94"/>
    </location>
</feature>
<gene>
    <name evidence="1" type="primary">groES</name>
    <name evidence="1" type="synonym">groS</name>
    <name type="ordered locus">Exig_2769</name>
</gene>
<organism>
    <name type="scientific">Exiguobacterium sibiricum (strain DSM 17290 / CCUG 55495 / CIP 109462 / JCM 13490 / 255-15)</name>
    <dbReference type="NCBI Taxonomy" id="262543"/>
    <lineage>
        <taxon>Bacteria</taxon>
        <taxon>Bacillati</taxon>
        <taxon>Bacillota</taxon>
        <taxon>Bacilli</taxon>
        <taxon>Bacillales</taxon>
        <taxon>Bacillales Family XII. Incertae Sedis</taxon>
        <taxon>Exiguobacterium</taxon>
    </lineage>
</organism>
<keyword id="KW-0143">Chaperone</keyword>
<keyword id="KW-0963">Cytoplasm</keyword>
<keyword id="KW-1185">Reference proteome</keyword>
<accession>B1YEP7</accession>